<sequence>MKRDIQYLLNPALQNIATYRVEGGQQAEIKLNQNESPFDVPMWLKEEITGEFIKEPWNRYPDILPYRGMQVYADFLGISPDSVMMSNGSNEMLYTIFLACLGPGRKVLIPDPSFSLYEKIALLLQSQIVTVPMLPDLDFDLEAILRTAHDEAVDFIVISTPNNPTGKSLTFEEVRLIAQSSDAIVLVDEAYIEFSRQRSVLELIDELPNLVVLRTMSKAIALAGIRIGFALANPLLMAEIAKPKIPFASSRLAEITLSMVLANYSLVTDAVSYILHEREKLYTAMLTIDGVEPFVSDTNFLIIRVSDAGSVFQNLQSQGILVRNVSGYRLMENCLRFNVGLVDENQQLIAKLRQF</sequence>
<name>HIS8_PELPB</name>
<proteinExistence type="inferred from homology"/>
<comment type="catalytic activity">
    <reaction evidence="1">
        <text>L-histidinol phosphate + 2-oxoglutarate = 3-(imidazol-4-yl)-2-oxopropyl phosphate + L-glutamate</text>
        <dbReference type="Rhea" id="RHEA:23744"/>
        <dbReference type="ChEBI" id="CHEBI:16810"/>
        <dbReference type="ChEBI" id="CHEBI:29985"/>
        <dbReference type="ChEBI" id="CHEBI:57766"/>
        <dbReference type="ChEBI" id="CHEBI:57980"/>
        <dbReference type="EC" id="2.6.1.9"/>
    </reaction>
</comment>
<comment type="cofactor">
    <cofactor evidence="1">
        <name>pyridoxal 5'-phosphate</name>
        <dbReference type="ChEBI" id="CHEBI:597326"/>
    </cofactor>
</comment>
<comment type="pathway">
    <text evidence="1">Amino-acid biosynthesis; L-histidine biosynthesis; L-histidine from 5-phospho-alpha-D-ribose 1-diphosphate: step 7/9.</text>
</comment>
<comment type="subunit">
    <text evidence="1">Homodimer.</text>
</comment>
<comment type="similarity">
    <text evidence="1">Belongs to the class-II pyridoxal-phosphate-dependent aminotransferase family. Histidinol-phosphate aminotransferase subfamily.</text>
</comment>
<keyword id="KW-0028">Amino-acid biosynthesis</keyword>
<keyword id="KW-0032">Aminotransferase</keyword>
<keyword id="KW-0368">Histidine biosynthesis</keyword>
<keyword id="KW-0663">Pyridoxal phosphate</keyword>
<keyword id="KW-1185">Reference proteome</keyword>
<keyword id="KW-0808">Transferase</keyword>
<accession>B4SGL8</accession>
<organism>
    <name type="scientific">Pelodictyon phaeoclathratiforme (strain DSM 5477 / BU-1)</name>
    <dbReference type="NCBI Taxonomy" id="324925"/>
    <lineage>
        <taxon>Bacteria</taxon>
        <taxon>Pseudomonadati</taxon>
        <taxon>Chlorobiota</taxon>
        <taxon>Chlorobiia</taxon>
        <taxon>Chlorobiales</taxon>
        <taxon>Chlorobiaceae</taxon>
        <taxon>Chlorobium/Pelodictyon group</taxon>
        <taxon>Pelodictyon</taxon>
    </lineage>
</organism>
<reference key="1">
    <citation type="submission" date="2008-06" db="EMBL/GenBank/DDBJ databases">
        <title>Complete sequence of Pelodictyon phaeoclathratiforme BU-1.</title>
        <authorList>
            <consortium name="US DOE Joint Genome Institute"/>
            <person name="Lucas S."/>
            <person name="Copeland A."/>
            <person name="Lapidus A."/>
            <person name="Glavina del Rio T."/>
            <person name="Dalin E."/>
            <person name="Tice H."/>
            <person name="Bruce D."/>
            <person name="Goodwin L."/>
            <person name="Pitluck S."/>
            <person name="Schmutz J."/>
            <person name="Larimer F."/>
            <person name="Land M."/>
            <person name="Hauser L."/>
            <person name="Kyrpides N."/>
            <person name="Mikhailova N."/>
            <person name="Liu Z."/>
            <person name="Li T."/>
            <person name="Zhao F."/>
            <person name="Overmann J."/>
            <person name="Bryant D.A."/>
            <person name="Richardson P."/>
        </authorList>
    </citation>
    <scope>NUCLEOTIDE SEQUENCE [LARGE SCALE GENOMIC DNA]</scope>
    <source>
        <strain>DSM 5477 / BU-1</strain>
    </source>
</reference>
<feature type="chain" id="PRO_1000135412" description="Histidinol-phosphate aminotransferase">
    <location>
        <begin position="1"/>
        <end position="355"/>
    </location>
</feature>
<feature type="modified residue" description="N6-(pyridoxal phosphate)lysine" evidence="1">
    <location>
        <position position="218"/>
    </location>
</feature>
<gene>
    <name evidence="1" type="primary">hisC</name>
    <name type="ordered locus">Ppha_1156</name>
</gene>
<evidence type="ECO:0000255" key="1">
    <source>
        <dbReference type="HAMAP-Rule" id="MF_01023"/>
    </source>
</evidence>
<protein>
    <recommendedName>
        <fullName evidence="1">Histidinol-phosphate aminotransferase</fullName>
        <ecNumber evidence="1">2.6.1.9</ecNumber>
    </recommendedName>
    <alternativeName>
        <fullName evidence="1">Imidazole acetol-phosphate transaminase</fullName>
    </alternativeName>
</protein>
<dbReference type="EC" id="2.6.1.9" evidence="1"/>
<dbReference type="EMBL" id="CP001110">
    <property type="protein sequence ID" value="ACF43431.1"/>
    <property type="molecule type" value="Genomic_DNA"/>
</dbReference>
<dbReference type="RefSeq" id="WP_012507923.1">
    <property type="nucleotide sequence ID" value="NC_011060.1"/>
</dbReference>
<dbReference type="SMR" id="B4SGL8"/>
<dbReference type="STRING" id="324925.Ppha_1156"/>
<dbReference type="KEGG" id="pph:Ppha_1156"/>
<dbReference type="eggNOG" id="COG0079">
    <property type="taxonomic scope" value="Bacteria"/>
</dbReference>
<dbReference type="HOGENOM" id="CLU_017584_3_1_10"/>
<dbReference type="OrthoDB" id="9813612at2"/>
<dbReference type="UniPathway" id="UPA00031">
    <property type="reaction ID" value="UER00012"/>
</dbReference>
<dbReference type="Proteomes" id="UP000002724">
    <property type="component" value="Chromosome"/>
</dbReference>
<dbReference type="GO" id="GO:0004400">
    <property type="term" value="F:histidinol-phosphate transaminase activity"/>
    <property type="evidence" value="ECO:0007669"/>
    <property type="project" value="UniProtKB-UniRule"/>
</dbReference>
<dbReference type="GO" id="GO:0030170">
    <property type="term" value="F:pyridoxal phosphate binding"/>
    <property type="evidence" value="ECO:0007669"/>
    <property type="project" value="InterPro"/>
</dbReference>
<dbReference type="GO" id="GO:0000105">
    <property type="term" value="P:L-histidine biosynthetic process"/>
    <property type="evidence" value="ECO:0007669"/>
    <property type="project" value="UniProtKB-UniRule"/>
</dbReference>
<dbReference type="CDD" id="cd00609">
    <property type="entry name" value="AAT_like"/>
    <property type="match status" value="1"/>
</dbReference>
<dbReference type="Gene3D" id="3.90.1150.10">
    <property type="entry name" value="Aspartate Aminotransferase, domain 1"/>
    <property type="match status" value="1"/>
</dbReference>
<dbReference type="Gene3D" id="3.40.640.10">
    <property type="entry name" value="Type I PLP-dependent aspartate aminotransferase-like (Major domain)"/>
    <property type="match status" value="1"/>
</dbReference>
<dbReference type="HAMAP" id="MF_01023">
    <property type="entry name" value="HisC_aminotrans_2"/>
    <property type="match status" value="1"/>
</dbReference>
<dbReference type="InterPro" id="IPR001917">
    <property type="entry name" value="Aminotrans_II_pyridoxalP_BS"/>
</dbReference>
<dbReference type="InterPro" id="IPR004839">
    <property type="entry name" value="Aminotransferase_I/II_large"/>
</dbReference>
<dbReference type="InterPro" id="IPR005861">
    <property type="entry name" value="HisP_aminotrans"/>
</dbReference>
<dbReference type="InterPro" id="IPR015424">
    <property type="entry name" value="PyrdxlP-dep_Trfase"/>
</dbReference>
<dbReference type="InterPro" id="IPR015421">
    <property type="entry name" value="PyrdxlP-dep_Trfase_major"/>
</dbReference>
<dbReference type="InterPro" id="IPR015422">
    <property type="entry name" value="PyrdxlP-dep_Trfase_small"/>
</dbReference>
<dbReference type="NCBIfam" id="TIGR01141">
    <property type="entry name" value="hisC"/>
    <property type="match status" value="1"/>
</dbReference>
<dbReference type="PANTHER" id="PTHR42885:SF2">
    <property type="entry name" value="HISTIDINOL-PHOSPHATE AMINOTRANSFERASE"/>
    <property type="match status" value="1"/>
</dbReference>
<dbReference type="PANTHER" id="PTHR42885">
    <property type="entry name" value="HISTIDINOL-PHOSPHATE AMINOTRANSFERASE-RELATED"/>
    <property type="match status" value="1"/>
</dbReference>
<dbReference type="Pfam" id="PF00155">
    <property type="entry name" value="Aminotran_1_2"/>
    <property type="match status" value="1"/>
</dbReference>
<dbReference type="SUPFAM" id="SSF53383">
    <property type="entry name" value="PLP-dependent transferases"/>
    <property type="match status" value="1"/>
</dbReference>
<dbReference type="PROSITE" id="PS00599">
    <property type="entry name" value="AA_TRANSFER_CLASS_2"/>
    <property type="match status" value="1"/>
</dbReference>